<keyword id="KW-1185">Reference proteome</keyword>
<keyword id="KW-0687">Ribonucleoprotein</keyword>
<keyword id="KW-0689">Ribosomal protein</keyword>
<reference key="1">
    <citation type="journal article" date="2009" name="BMC Genomics">
        <title>The complete genome sequence of Staphylothermus marinus reveals differences in sulfur metabolism among heterotrophic Crenarchaeota.</title>
        <authorList>
            <person name="Anderson I.J."/>
            <person name="Dharmarajan L."/>
            <person name="Rodriguez J."/>
            <person name="Hooper S."/>
            <person name="Porat I."/>
            <person name="Ulrich L.E."/>
            <person name="Elkins J.G."/>
            <person name="Mavromatis K."/>
            <person name="Sun H."/>
            <person name="Land M."/>
            <person name="Lapidus A."/>
            <person name="Lucas S."/>
            <person name="Barry K."/>
            <person name="Huber H."/>
            <person name="Zhulin I.B."/>
            <person name="Whitman W.B."/>
            <person name="Mukhopadhyay B."/>
            <person name="Woese C."/>
            <person name="Bristow J."/>
            <person name="Kyrpides N."/>
        </authorList>
    </citation>
    <scope>NUCLEOTIDE SEQUENCE [LARGE SCALE GENOMIC DNA]</scope>
    <source>
        <strain>ATCC 43588 / DSM 3639 / JCM 9404 / F1</strain>
    </source>
</reference>
<reference key="2">
    <citation type="journal article" date="2009" name="Stand. Genomic Sci.">
        <title>Complete genome sequence of Staphylothermus marinus Stetter and Fiala 1986 type strain F1.</title>
        <authorList>
            <person name="Anderson I.J."/>
            <person name="Sun H."/>
            <person name="Lapidus A."/>
            <person name="Copeland A."/>
            <person name="Glavina Del Rio T."/>
            <person name="Tice H."/>
            <person name="Dalin E."/>
            <person name="Lucas S."/>
            <person name="Barry K."/>
            <person name="Land M."/>
            <person name="Richardson P."/>
            <person name="Huber H."/>
            <person name="Kyrpides N.C."/>
        </authorList>
    </citation>
    <scope>NUCLEOTIDE SEQUENCE [LARGE SCALE GENOMIC DNA]</scope>
    <source>
        <strain>ATCC 43588 / DSM 3639 / JCM 9404 / F1</strain>
    </source>
</reference>
<name>RS15_STAMF</name>
<protein>
    <recommendedName>
        <fullName evidence="1">Small ribosomal subunit protein uS15</fullName>
    </recommendedName>
    <alternativeName>
        <fullName evidence="3">30S ribosomal protein S15</fullName>
    </alternativeName>
</protein>
<feature type="chain" id="PRO_0000354231" description="Small ribosomal subunit protein uS15">
    <location>
        <begin position="1"/>
        <end position="154"/>
    </location>
</feature>
<feature type="region of interest" description="Disordered" evidence="2">
    <location>
        <begin position="1"/>
        <end position="23"/>
    </location>
</feature>
<comment type="subunit">
    <text evidence="1">Part of the 30S ribosomal subunit.</text>
</comment>
<comment type="similarity">
    <text evidence="1">Belongs to the universal ribosomal protein uS15 family.</text>
</comment>
<organism>
    <name type="scientific">Staphylothermus marinus (strain ATCC 43588 / DSM 3639 / JCM 9404 / F1)</name>
    <dbReference type="NCBI Taxonomy" id="399550"/>
    <lineage>
        <taxon>Archaea</taxon>
        <taxon>Thermoproteota</taxon>
        <taxon>Thermoprotei</taxon>
        <taxon>Desulfurococcales</taxon>
        <taxon>Desulfurococcaceae</taxon>
        <taxon>Staphylothermus</taxon>
    </lineage>
</organism>
<proteinExistence type="inferred from homology"/>
<gene>
    <name evidence="1" type="primary">rps15</name>
    <name type="ordered locus">Smar_0841</name>
</gene>
<dbReference type="EMBL" id="CP000575">
    <property type="protein sequence ID" value="ABN69942.1"/>
    <property type="molecule type" value="Genomic_DNA"/>
</dbReference>
<dbReference type="RefSeq" id="WP_011839133.1">
    <property type="nucleotide sequence ID" value="NC_009033.1"/>
</dbReference>
<dbReference type="SMR" id="A3DMT2"/>
<dbReference type="STRING" id="399550.Smar_0841"/>
<dbReference type="GeneID" id="4907676"/>
<dbReference type="KEGG" id="smr:Smar_0841"/>
<dbReference type="eggNOG" id="arCOG04185">
    <property type="taxonomic scope" value="Archaea"/>
</dbReference>
<dbReference type="HOGENOM" id="CLU_090139_2_0_2"/>
<dbReference type="OrthoDB" id="6533at2157"/>
<dbReference type="Proteomes" id="UP000000254">
    <property type="component" value="Chromosome"/>
</dbReference>
<dbReference type="GO" id="GO:0022627">
    <property type="term" value="C:cytosolic small ribosomal subunit"/>
    <property type="evidence" value="ECO:0007669"/>
    <property type="project" value="TreeGrafter"/>
</dbReference>
<dbReference type="GO" id="GO:0070181">
    <property type="term" value="F:small ribosomal subunit rRNA binding"/>
    <property type="evidence" value="ECO:0007669"/>
    <property type="project" value="TreeGrafter"/>
</dbReference>
<dbReference type="GO" id="GO:0003735">
    <property type="term" value="F:structural constituent of ribosome"/>
    <property type="evidence" value="ECO:0007669"/>
    <property type="project" value="InterPro"/>
</dbReference>
<dbReference type="GO" id="GO:0006412">
    <property type="term" value="P:translation"/>
    <property type="evidence" value="ECO:0007669"/>
    <property type="project" value="UniProtKB-UniRule"/>
</dbReference>
<dbReference type="CDD" id="cd00353">
    <property type="entry name" value="Ribosomal_S15p_S13e"/>
    <property type="match status" value="1"/>
</dbReference>
<dbReference type="FunFam" id="1.10.287.10:FF:000003">
    <property type="entry name" value="40S ribosomal protein S13"/>
    <property type="match status" value="1"/>
</dbReference>
<dbReference type="FunFam" id="4.10.860.130:FF:000001">
    <property type="entry name" value="40S ribosomal protein S13"/>
    <property type="match status" value="1"/>
</dbReference>
<dbReference type="Gene3D" id="4.10.860.130">
    <property type="match status" value="1"/>
</dbReference>
<dbReference type="Gene3D" id="1.10.287.10">
    <property type="entry name" value="S15/NS1, RNA-binding"/>
    <property type="match status" value="1"/>
</dbReference>
<dbReference type="HAMAP" id="MF_01343_A">
    <property type="entry name" value="Ribosomal_uS15_A"/>
    <property type="match status" value="1"/>
</dbReference>
<dbReference type="InterPro" id="IPR000589">
    <property type="entry name" value="Ribosomal_uS15"/>
</dbReference>
<dbReference type="InterPro" id="IPR023029">
    <property type="entry name" value="Ribosomal_uS15_arc_euk"/>
</dbReference>
<dbReference type="InterPro" id="IPR012606">
    <property type="entry name" value="Ribosomal_uS15_N"/>
</dbReference>
<dbReference type="InterPro" id="IPR009068">
    <property type="entry name" value="uS15_NS1_RNA-bd_sf"/>
</dbReference>
<dbReference type="NCBIfam" id="NF006331">
    <property type="entry name" value="PRK08561.1"/>
    <property type="match status" value="1"/>
</dbReference>
<dbReference type="PANTHER" id="PTHR11885">
    <property type="entry name" value="RIBOSOMAL PROTEIN S15P/S13E"/>
    <property type="match status" value="1"/>
</dbReference>
<dbReference type="PANTHER" id="PTHR11885:SF6">
    <property type="entry name" value="SMALL RIBOSOMAL SUBUNIT PROTEIN US15"/>
    <property type="match status" value="1"/>
</dbReference>
<dbReference type="Pfam" id="PF08069">
    <property type="entry name" value="Ribosomal_S13_N"/>
    <property type="match status" value="1"/>
</dbReference>
<dbReference type="Pfam" id="PF00312">
    <property type="entry name" value="Ribosomal_S15"/>
    <property type="match status" value="1"/>
</dbReference>
<dbReference type="SMART" id="SM01386">
    <property type="entry name" value="Ribosomal_S13_N"/>
    <property type="match status" value="1"/>
</dbReference>
<dbReference type="SMART" id="SM01387">
    <property type="entry name" value="Ribosomal_S15"/>
    <property type="match status" value="1"/>
</dbReference>
<dbReference type="SUPFAM" id="SSF47060">
    <property type="entry name" value="S15/NS1 RNA-binding domain"/>
    <property type="match status" value="1"/>
</dbReference>
<dbReference type="PROSITE" id="PS00362">
    <property type="entry name" value="RIBOSOMAL_S15"/>
    <property type="match status" value="1"/>
</dbReference>
<evidence type="ECO:0000255" key="1">
    <source>
        <dbReference type="HAMAP-Rule" id="MF_01343"/>
    </source>
</evidence>
<evidence type="ECO:0000256" key="2">
    <source>
        <dbReference type="SAM" id="MobiDB-lite"/>
    </source>
</evidence>
<evidence type="ECO:0000305" key="3"/>
<accession>A3DMT2</accession>
<sequence length="154" mass="17805">MNKKRDKGQSHSTRPARAGPPRWLKLDMSPSDIELLVVELAKKGYTPSMIGIILRDQYGVPLVKQVTGKKLVQILEKHGIKLPVPEDLLFLMRKAVNLRRHLEEHPKDFHAKKGLLDLESKIHRLVKYYKRIGRLPPDWKYTPEQAKLIVSAYL</sequence>